<feature type="chain" id="PRO_0000296722" description="Adenine deaminase">
    <location>
        <begin position="1"/>
        <end position="575"/>
    </location>
</feature>
<gene>
    <name evidence="1" type="primary">ade</name>
    <name type="ordered locus">Dvul_2495</name>
</gene>
<organism>
    <name type="scientific">Nitratidesulfovibrio vulgaris (strain DP4)</name>
    <name type="common">Desulfovibrio vulgaris</name>
    <dbReference type="NCBI Taxonomy" id="391774"/>
    <lineage>
        <taxon>Bacteria</taxon>
        <taxon>Pseudomonadati</taxon>
        <taxon>Thermodesulfobacteriota</taxon>
        <taxon>Desulfovibrionia</taxon>
        <taxon>Desulfovibrionales</taxon>
        <taxon>Desulfovibrionaceae</taxon>
        <taxon>Nitratidesulfovibrio</taxon>
    </lineage>
</organism>
<proteinExistence type="inferred from homology"/>
<evidence type="ECO:0000255" key="1">
    <source>
        <dbReference type="HAMAP-Rule" id="MF_01518"/>
    </source>
</evidence>
<name>ADEC_NITV4</name>
<accession>A1VGE5</accession>
<reference key="1">
    <citation type="journal article" date="2009" name="Environ. Microbiol.">
        <title>Contribution of mobile genetic elements to Desulfovibrio vulgaris genome plasticity.</title>
        <authorList>
            <person name="Walker C.B."/>
            <person name="Stolyar S."/>
            <person name="Chivian D."/>
            <person name="Pinel N."/>
            <person name="Gabster J.A."/>
            <person name="Dehal P.S."/>
            <person name="He Z."/>
            <person name="Yang Z.K."/>
            <person name="Yen H.C."/>
            <person name="Zhou J."/>
            <person name="Wall J.D."/>
            <person name="Hazen T.C."/>
            <person name="Arkin A.P."/>
            <person name="Stahl D.A."/>
        </authorList>
    </citation>
    <scope>NUCLEOTIDE SEQUENCE [LARGE SCALE GENOMIC DNA]</scope>
    <source>
        <strain>DP4</strain>
    </source>
</reference>
<protein>
    <recommendedName>
        <fullName evidence="1">Adenine deaminase</fullName>
        <shortName evidence="1">Adenase</shortName>
        <shortName evidence="1">Adenine aminase</shortName>
        <ecNumber evidence="1">3.5.4.2</ecNumber>
    </recommendedName>
</protein>
<dbReference type="EC" id="3.5.4.2" evidence="1"/>
<dbReference type="EMBL" id="CP000527">
    <property type="protein sequence ID" value="ABM29511.1"/>
    <property type="molecule type" value="Genomic_DNA"/>
</dbReference>
<dbReference type="RefSeq" id="WP_011792891.1">
    <property type="nucleotide sequence ID" value="NC_008751.1"/>
</dbReference>
<dbReference type="SMR" id="A1VGE5"/>
<dbReference type="KEGG" id="dvl:Dvul_2495"/>
<dbReference type="HOGENOM" id="CLU_027935_0_0_7"/>
<dbReference type="Proteomes" id="UP000009173">
    <property type="component" value="Chromosome"/>
</dbReference>
<dbReference type="GO" id="GO:0000034">
    <property type="term" value="F:adenine deaminase activity"/>
    <property type="evidence" value="ECO:0007669"/>
    <property type="project" value="UniProtKB-UniRule"/>
</dbReference>
<dbReference type="GO" id="GO:0006146">
    <property type="term" value="P:adenine catabolic process"/>
    <property type="evidence" value="ECO:0007669"/>
    <property type="project" value="InterPro"/>
</dbReference>
<dbReference type="CDD" id="cd01295">
    <property type="entry name" value="AdeC"/>
    <property type="match status" value="1"/>
</dbReference>
<dbReference type="Gene3D" id="3.20.20.140">
    <property type="entry name" value="Metal-dependent hydrolases"/>
    <property type="match status" value="1"/>
</dbReference>
<dbReference type="Gene3D" id="2.30.40.10">
    <property type="entry name" value="Urease, subunit C, domain 1"/>
    <property type="match status" value="1"/>
</dbReference>
<dbReference type="HAMAP" id="MF_01518">
    <property type="entry name" value="Adenine_deamin"/>
    <property type="match status" value="1"/>
</dbReference>
<dbReference type="InterPro" id="IPR006679">
    <property type="entry name" value="Adenine_deam"/>
</dbReference>
<dbReference type="InterPro" id="IPR026912">
    <property type="entry name" value="Adenine_deam_C"/>
</dbReference>
<dbReference type="InterPro" id="IPR006680">
    <property type="entry name" value="Amidohydro-rel"/>
</dbReference>
<dbReference type="InterPro" id="IPR011059">
    <property type="entry name" value="Metal-dep_hydrolase_composite"/>
</dbReference>
<dbReference type="InterPro" id="IPR032466">
    <property type="entry name" value="Metal_Hydrolase"/>
</dbReference>
<dbReference type="NCBIfam" id="TIGR01178">
    <property type="entry name" value="ade"/>
    <property type="match status" value="1"/>
</dbReference>
<dbReference type="PANTHER" id="PTHR11113:SF2">
    <property type="entry name" value="ADENINE DEAMINASE"/>
    <property type="match status" value="1"/>
</dbReference>
<dbReference type="PANTHER" id="PTHR11113">
    <property type="entry name" value="N-ACETYLGLUCOSAMINE-6-PHOSPHATE DEACETYLASE"/>
    <property type="match status" value="1"/>
</dbReference>
<dbReference type="Pfam" id="PF13382">
    <property type="entry name" value="Adenine_deam_C"/>
    <property type="match status" value="1"/>
</dbReference>
<dbReference type="Pfam" id="PF01979">
    <property type="entry name" value="Amidohydro_1"/>
    <property type="match status" value="1"/>
</dbReference>
<dbReference type="SUPFAM" id="SSF51338">
    <property type="entry name" value="Composite domain of metallo-dependent hydrolases"/>
    <property type="match status" value="1"/>
</dbReference>
<dbReference type="SUPFAM" id="SSF51556">
    <property type="entry name" value="Metallo-dependent hydrolases"/>
    <property type="match status" value="1"/>
</dbReference>
<keyword id="KW-0378">Hydrolase</keyword>
<keyword id="KW-0464">Manganese</keyword>
<comment type="catalytic activity">
    <reaction evidence="1">
        <text>adenine + H2O + H(+) = hypoxanthine + NH4(+)</text>
        <dbReference type="Rhea" id="RHEA:23688"/>
        <dbReference type="ChEBI" id="CHEBI:15377"/>
        <dbReference type="ChEBI" id="CHEBI:15378"/>
        <dbReference type="ChEBI" id="CHEBI:16708"/>
        <dbReference type="ChEBI" id="CHEBI:17368"/>
        <dbReference type="ChEBI" id="CHEBI:28938"/>
        <dbReference type="EC" id="3.5.4.2"/>
    </reaction>
</comment>
<comment type="cofactor">
    <cofactor evidence="1">
        <name>Mn(2+)</name>
        <dbReference type="ChEBI" id="CHEBI:29035"/>
    </cofactor>
</comment>
<comment type="similarity">
    <text evidence="1">Belongs to the metallo-dependent hydrolases superfamily. Adenine deaminase family.</text>
</comment>
<sequence>MTYRPLLNDLVDMAAGRAPVDLVVRNARIVDVFSQSIVEAPLAIGGGRFLGFFEAEAHATLDAEGRYLLPGLIDGHVHIESSLVSPAQFARLVLARGTTAVIADPHEIANVCGLAGLRYMLDATRDLPLDVRLALPSCVPATPFENAGAVLDAAALATLMDDPRVAGLGEMMNFPGVLAGDADVLDKIALALDRGKTVDGHSPGLAGRDLATYAAARIATDHECTTVEEMHERIALGMYVLLREGSAARDMARLAPGITPGNARRCVFCTDDRQPADILRDGHIDNHLRIAVSHGVDPVTAVTIATLNAAECFGLRDRGAVAPGRVADFVLVDDLTGFAVRKVYAAGRLVARDGAVVVDLPDHADPAVRDTVNIRPLDDTAFRLPLPTGLARVIGLQPHSLLTDALERDVPRDASGCFTPGDGLVKLAVVERHKATGNVGVGIIEGYGLRGGAVATTVAHDSHNIVVAGDNDADMLVAVRELERTGGGITLCAGGRVLASLPLPVAGLMSDRPATEVSETFAQMLSIAHETLHISRDIEPFMTLSFLTLPVIPALKLTDRGLFDVRTFSFTTVGV</sequence>